<dbReference type="EMBL" id="CP000036">
    <property type="protein sequence ID" value="ABB65394.1"/>
    <property type="molecule type" value="Genomic_DNA"/>
</dbReference>
<dbReference type="RefSeq" id="WP_000090142.1">
    <property type="nucleotide sequence ID" value="NC_007613.1"/>
</dbReference>
<dbReference type="SMR" id="Q323W4"/>
<dbReference type="KEGG" id="sbo:SBO_0720"/>
<dbReference type="HOGENOM" id="CLU_017028_7_3_6"/>
<dbReference type="Proteomes" id="UP000007067">
    <property type="component" value="Chromosome"/>
</dbReference>
<dbReference type="GO" id="GO:0043190">
    <property type="term" value="C:ATP-binding cassette (ABC) transporter complex"/>
    <property type="evidence" value="ECO:0007669"/>
    <property type="project" value="InterPro"/>
</dbReference>
<dbReference type="GO" id="GO:0030288">
    <property type="term" value="C:outer membrane-bounded periplasmic space"/>
    <property type="evidence" value="ECO:0007669"/>
    <property type="project" value="TreeGrafter"/>
</dbReference>
<dbReference type="GO" id="GO:1904680">
    <property type="term" value="F:peptide transmembrane transporter activity"/>
    <property type="evidence" value="ECO:0007669"/>
    <property type="project" value="TreeGrafter"/>
</dbReference>
<dbReference type="GO" id="GO:0042938">
    <property type="term" value="P:dipeptide transport"/>
    <property type="evidence" value="ECO:0007669"/>
    <property type="project" value="TreeGrafter"/>
</dbReference>
<dbReference type="CDD" id="cd08499">
    <property type="entry name" value="PBP2_Ylib_like"/>
    <property type="match status" value="1"/>
</dbReference>
<dbReference type="FunFam" id="3.10.105.10:FF:000003">
    <property type="entry name" value="Glutathione ABC transporter substrate-binding protein GsiB"/>
    <property type="match status" value="1"/>
</dbReference>
<dbReference type="FunFam" id="3.40.190.10:FF:000094">
    <property type="entry name" value="Glutathione ABC transporter substrate-binding protein GsiB"/>
    <property type="match status" value="1"/>
</dbReference>
<dbReference type="FunFam" id="3.90.76.10:FF:000003">
    <property type="entry name" value="Glutathione ABC transporter substrate-binding protein GsiB"/>
    <property type="match status" value="1"/>
</dbReference>
<dbReference type="Gene3D" id="3.90.76.10">
    <property type="entry name" value="Dipeptide-binding Protein, Domain 1"/>
    <property type="match status" value="1"/>
</dbReference>
<dbReference type="Gene3D" id="3.10.105.10">
    <property type="entry name" value="Dipeptide-binding Protein, Domain 3"/>
    <property type="match status" value="1"/>
</dbReference>
<dbReference type="Gene3D" id="3.40.190.10">
    <property type="entry name" value="Periplasmic binding protein-like II"/>
    <property type="match status" value="1"/>
</dbReference>
<dbReference type="InterPro" id="IPR030678">
    <property type="entry name" value="Peptide/Ni-bd"/>
</dbReference>
<dbReference type="InterPro" id="IPR039424">
    <property type="entry name" value="SBP_5"/>
</dbReference>
<dbReference type="InterPro" id="IPR023765">
    <property type="entry name" value="SBP_5_CS"/>
</dbReference>
<dbReference type="InterPro" id="IPR000914">
    <property type="entry name" value="SBP_5_dom"/>
</dbReference>
<dbReference type="NCBIfam" id="NF011942">
    <property type="entry name" value="PRK15413.1"/>
    <property type="match status" value="1"/>
</dbReference>
<dbReference type="PANTHER" id="PTHR30290:SF32">
    <property type="entry name" value="GLUTATHIONE-BINDING PROTEIN GSIB"/>
    <property type="match status" value="1"/>
</dbReference>
<dbReference type="PANTHER" id="PTHR30290">
    <property type="entry name" value="PERIPLASMIC BINDING COMPONENT OF ABC TRANSPORTER"/>
    <property type="match status" value="1"/>
</dbReference>
<dbReference type="Pfam" id="PF00496">
    <property type="entry name" value="SBP_bac_5"/>
    <property type="match status" value="1"/>
</dbReference>
<dbReference type="PIRSF" id="PIRSF002741">
    <property type="entry name" value="MppA"/>
    <property type="match status" value="1"/>
</dbReference>
<dbReference type="SUPFAM" id="SSF53850">
    <property type="entry name" value="Periplasmic binding protein-like II"/>
    <property type="match status" value="1"/>
</dbReference>
<dbReference type="PROSITE" id="PS01040">
    <property type="entry name" value="SBP_BACTERIAL_5"/>
    <property type="match status" value="1"/>
</dbReference>
<feature type="signal peptide" evidence="2">
    <location>
        <begin position="1"/>
        <end position="26"/>
    </location>
</feature>
<feature type="chain" id="PRO_0000279982" description="Glutathione-binding protein GsiB">
    <location>
        <begin position="27"/>
        <end position="512"/>
    </location>
</feature>
<evidence type="ECO:0000250" key="1">
    <source>
        <dbReference type="UniProtKB" id="P75797"/>
    </source>
</evidence>
<evidence type="ECO:0000255" key="2"/>
<evidence type="ECO:0000305" key="3"/>
<proteinExistence type="inferred from homology"/>
<gene>
    <name evidence="1" type="primary">gsiB</name>
    <name type="ordered locus">SBO_0720</name>
</gene>
<keyword id="KW-0574">Periplasm</keyword>
<keyword id="KW-0732">Signal</keyword>
<keyword id="KW-0813">Transport</keyword>
<sequence>MARAVHRSGLVALGIATALMASCAFAAKDVVVAVGSNFTTLDPYDANDTLSQAVAKSFYQGLFGLDKEMKLKNVLAESYTVSDDGITYTVKLREGIKFQDGTDFNAAAVKANLDRASDPANHLKRYNLYKNIAKTEAIDPTTVKITLKQPFSAFINILVHPATAMISPAALEKYGKEIGFHPVGTGPYELDTWNQTDFVKVKKFAGYWQPGLPKLDSITWRPVADNNTRAAMLQTGEAQFAFPIPYEQAALLEKNKNIELMASPSIMQRYISMNVTQKPFDNPKVREALNYAINRPALVKVAFAGYATPATGVVPPSIAYAQSYKPWPYDPVKARELLKEAGYPNGFSTTLWSSHNHSTAQKVLQFTQQQLAQVGIKAQVTAMDAGQRAAEVEGKGQKESGVRMFYTGWSASTGEADWALSPLFASQNWPPTLFNTAFYSNKQVDDFLAQALKTNDPAEKTRLYKAAQDIIWQESPWIPLVVEKLVSAHSKNLTGFWIMPDTGFSFEDADLQ</sequence>
<reference key="1">
    <citation type="journal article" date="2005" name="Nucleic Acids Res.">
        <title>Genome dynamics and diversity of Shigella species, the etiologic agents of bacillary dysentery.</title>
        <authorList>
            <person name="Yang F."/>
            <person name="Yang J."/>
            <person name="Zhang X."/>
            <person name="Chen L."/>
            <person name="Jiang Y."/>
            <person name="Yan Y."/>
            <person name="Tang X."/>
            <person name="Wang J."/>
            <person name="Xiong Z."/>
            <person name="Dong J."/>
            <person name="Xue Y."/>
            <person name="Zhu Y."/>
            <person name="Xu X."/>
            <person name="Sun L."/>
            <person name="Chen S."/>
            <person name="Nie H."/>
            <person name="Peng J."/>
            <person name="Xu J."/>
            <person name="Wang Y."/>
            <person name="Yuan Z."/>
            <person name="Wen Y."/>
            <person name="Yao Z."/>
            <person name="Shen Y."/>
            <person name="Qiang B."/>
            <person name="Hou Y."/>
            <person name="Yu J."/>
            <person name="Jin Q."/>
        </authorList>
    </citation>
    <scope>NUCLEOTIDE SEQUENCE [LARGE SCALE GENOMIC DNA]</scope>
    <source>
        <strain>Sb227</strain>
    </source>
</reference>
<accession>Q323W4</accession>
<name>GSIB_SHIBS</name>
<comment type="function">
    <text evidence="1">Part of the ABC transporter complex GsiABCD involved in glutathione import. Binds glutathione.</text>
</comment>
<comment type="subunit">
    <text evidence="1">The complex is composed of two ATP-binding proteins (GsiA), two transmembrane proteins (GsiC and GsiD) and a solute-binding protein (GsiB).</text>
</comment>
<comment type="subcellular location">
    <subcellularLocation>
        <location evidence="1">Periplasm</location>
    </subcellularLocation>
</comment>
<comment type="similarity">
    <text evidence="3">Belongs to the bacterial solute-binding protein 5 family.</text>
</comment>
<organism>
    <name type="scientific">Shigella boydii serotype 4 (strain Sb227)</name>
    <dbReference type="NCBI Taxonomy" id="300268"/>
    <lineage>
        <taxon>Bacteria</taxon>
        <taxon>Pseudomonadati</taxon>
        <taxon>Pseudomonadota</taxon>
        <taxon>Gammaproteobacteria</taxon>
        <taxon>Enterobacterales</taxon>
        <taxon>Enterobacteriaceae</taxon>
        <taxon>Shigella</taxon>
    </lineage>
</organism>
<protein>
    <recommendedName>
        <fullName evidence="1">Glutathione-binding protein GsiB</fullName>
    </recommendedName>
</protein>